<gene>
    <name evidence="1" type="primary">fbiD</name>
    <name type="ordered locus">ML1680</name>
    <name type="ORF">MLCB637.37c</name>
</gene>
<proteinExistence type="inferred from homology"/>
<accession>O33128</accession>
<keyword id="KW-0342">GTP-binding</keyword>
<keyword id="KW-0547">Nucleotide-binding</keyword>
<keyword id="KW-0548">Nucleotidyltransferase</keyword>
<keyword id="KW-1185">Reference proteome</keyword>
<keyword id="KW-0808">Transferase</keyword>
<protein>
    <recommendedName>
        <fullName evidence="1">Phosphoenolpyruvate guanylyltransferase</fullName>
        <shortName evidence="1">PEP guanylyltransferase</shortName>
        <ecNumber evidence="1">2.7.7.105</ecNumber>
    </recommendedName>
</protein>
<evidence type="ECO:0000255" key="1">
    <source>
        <dbReference type="HAMAP-Rule" id="MF_02114"/>
    </source>
</evidence>
<organism>
    <name type="scientific">Mycobacterium leprae (strain TN)</name>
    <dbReference type="NCBI Taxonomy" id="272631"/>
    <lineage>
        <taxon>Bacteria</taxon>
        <taxon>Bacillati</taxon>
        <taxon>Actinomycetota</taxon>
        <taxon>Actinomycetes</taxon>
        <taxon>Mycobacteriales</taxon>
        <taxon>Mycobacteriaceae</taxon>
        <taxon>Mycobacterium</taxon>
    </lineage>
</organism>
<comment type="function">
    <text evidence="1">Guanylyltransferase that catalyzes the activation of phosphoenolpyruvate (PEP) as enolpyruvoyl-2-diphospho-5'-guanosine, via the condensation of PEP with GTP. It is involved in the biosynthesis of coenzyme F420, a hydride carrier cofactor.</text>
</comment>
<comment type="catalytic activity">
    <reaction evidence="1">
        <text>phosphoenolpyruvate + GTP + H(+) = enolpyruvoyl-2-diphospho-5'-guanosine + diphosphate</text>
        <dbReference type="Rhea" id="RHEA:30519"/>
        <dbReference type="ChEBI" id="CHEBI:15378"/>
        <dbReference type="ChEBI" id="CHEBI:33019"/>
        <dbReference type="ChEBI" id="CHEBI:37565"/>
        <dbReference type="ChEBI" id="CHEBI:58702"/>
        <dbReference type="ChEBI" id="CHEBI:143701"/>
        <dbReference type="EC" id="2.7.7.105"/>
    </reaction>
</comment>
<comment type="pathway">
    <text evidence="1">Cofactor biosynthesis; coenzyme F420 biosynthesis.</text>
</comment>
<comment type="similarity">
    <text evidence="1">Belongs to the CofC family.</text>
</comment>
<dbReference type="EC" id="2.7.7.105" evidence="1"/>
<dbReference type="EMBL" id="Z99263">
    <property type="protein sequence ID" value="CAB16452.1"/>
    <property type="molecule type" value="Genomic_DNA"/>
</dbReference>
<dbReference type="EMBL" id="AL583923">
    <property type="protein sequence ID" value="CAC30633.1"/>
    <property type="molecule type" value="Genomic_DNA"/>
</dbReference>
<dbReference type="PIR" id="T45430">
    <property type="entry name" value="T45430"/>
</dbReference>
<dbReference type="RefSeq" id="NP_302154.1">
    <property type="nucleotide sequence ID" value="NC_002677.1"/>
</dbReference>
<dbReference type="SMR" id="O33128"/>
<dbReference type="STRING" id="272631.gene:17575523"/>
<dbReference type="KEGG" id="mle:ML1680"/>
<dbReference type="PATRIC" id="fig|272631.5.peg.3172"/>
<dbReference type="Leproma" id="ML1680"/>
<dbReference type="eggNOG" id="COG1920">
    <property type="taxonomic scope" value="Bacteria"/>
</dbReference>
<dbReference type="HOGENOM" id="CLU_076569_0_0_11"/>
<dbReference type="OrthoDB" id="9151145at2"/>
<dbReference type="UniPathway" id="UPA00071"/>
<dbReference type="Proteomes" id="UP000000806">
    <property type="component" value="Chromosome"/>
</dbReference>
<dbReference type="GO" id="GO:0005525">
    <property type="term" value="F:GTP binding"/>
    <property type="evidence" value="ECO:0007669"/>
    <property type="project" value="UniProtKB-KW"/>
</dbReference>
<dbReference type="GO" id="GO:0043814">
    <property type="term" value="F:phospholactate guanylyltransferase activity"/>
    <property type="evidence" value="ECO:0007669"/>
    <property type="project" value="InterPro"/>
</dbReference>
<dbReference type="GO" id="GO:0052645">
    <property type="term" value="P:F420-0 metabolic process"/>
    <property type="evidence" value="ECO:0007669"/>
    <property type="project" value="UniProtKB-UniRule"/>
</dbReference>
<dbReference type="Gene3D" id="3.90.550.10">
    <property type="entry name" value="Spore Coat Polysaccharide Biosynthesis Protein SpsA, Chain A"/>
    <property type="match status" value="1"/>
</dbReference>
<dbReference type="HAMAP" id="MF_02114">
    <property type="entry name" value="CofC"/>
    <property type="match status" value="1"/>
</dbReference>
<dbReference type="InterPro" id="IPR002835">
    <property type="entry name" value="CofC"/>
</dbReference>
<dbReference type="InterPro" id="IPR029044">
    <property type="entry name" value="Nucleotide-diphossugar_trans"/>
</dbReference>
<dbReference type="NCBIfam" id="TIGR03552">
    <property type="entry name" value="F420_cofC"/>
    <property type="match status" value="1"/>
</dbReference>
<dbReference type="PANTHER" id="PTHR40392">
    <property type="entry name" value="2-PHOSPHO-L-LACTATE GUANYLYLTRANSFERASE"/>
    <property type="match status" value="1"/>
</dbReference>
<dbReference type="PANTHER" id="PTHR40392:SF1">
    <property type="entry name" value="2-PHOSPHO-L-LACTATE GUANYLYLTRANSFERASE"/>
    <property type="match status" value="1"/>
</dbReference>
<dbReference type="Pfam" id="PF01983">
    <property type="entry name" value="CofC"/>
    <property type="match status" value="1"/>
</dbReference>
<dbReference type="SUPFAM" id="SSF53448">
    <property type="entry name" value="Nucleotide-diphospho-sugar transferases"/>
    <property type="match status" value="1"/>
</dbReference>
<feature type="chain" id="PRO_0000398691" description="Phosphoenolpyruvate guanylyltransferase">
    <location>
        <begin position="1"/>
        <end position="216"/>
    </location>
</feature>
<feature type="binding site" evidence="1">
    <location>
        <position position="150"/>
    </location>
    <ligand>
        <name>phosphoenolpyruvate</name>
        <dbReference type="ChEBI" id="CHEBI:58702"/>
    </ligand>
</feature>
<feature type="binding site" evidence="1">
    <location>
        <position position="165"/>
    </location>
    <ligand>
        <name>phosphoenolpyruvate</name>
        <dbReference type="ChEBI" id="CHEBI:58702"/>
    </ligand>
</feature>
<feature type="binding site" evidence="1">
    <location>
        <position position="168"/>
    </location>
    <ligand>
        <name>phosphoenolpyruvate</name>
        <dbReference type="ChEBI" id="CHEBI:58702"/>
    </ligand>
</feature>
<reference key="1">
    <citation type="journal article" date="2001" name="Nature">
        <title>Massive gene decay in the leprosy bacillus.</title>
        <authorList>
            <person name="Cole S.T."/>
            <person name="Eiglmeier K."/>
            <person name="Parkhill J."/>
            <person name="James K.D."/>
            <person name="Thomson N.R."/>
            <person name="Wheeler P.R."/>
            <person name="Honore N."/>
            <person name="Garnier T."/>
            <person name="Churcher C.M."/>
            <person name="Harris D.E."/>
            <person name="Mungall K.L."/>
            <person name="Basham D."/>
            <person name="Brown D."/>
            <person name="Chillingworth T."/>
            <person name="Connor R."/>
            <person name="Davies R.M."/>
            <person name="Devlin K."/>
            <person name="Duthoy S."/>
            <person name="Feltwell T."/>
            <person name="Fraser A."/>
            <person name="Hamlin N."/>
            <person name="Holroyd S."/>
            <person name="Hornsby T."/>
            <person name="Jagels K."/>
            <person name="Lacroix C."/>
            <person name="Maclean J."/>
            <person name="Moule S."/>
            <person name="Murphy L.D."/>
            <person name="Oliver K."/>
            <person name="Quail M.A."/>
            <person name="Rajandream M.A."/>
            <person name="Rutherford K.M."/>
            <person name="Rutter S."/>
            <person name="Seeger K."/>
            <person name="Simon S."/>
            <person name="Simmonds M."/>
            <person name="Skelton J."/>
            <person name="Squares R."/>
            <person name="Squares S."/>
            <person name="Stevens K."/>
            <person name="Taylor K."/>
            <person name="Whitehead S."/>
            <person name="Woodward J.R."/>
            <person name="Barrell B.G."/>
        </authorList>
    </citation>
    <scope>NUCLEOTIDE SEQUENCE [LARGE SCALE GENOMIC DNA]</scope>
    <source>
        <strain>TN</strain>
    </source>
</reference>
<sequence>MSGTRAGGTADVGLIIAVKRLAAAKTRLGPVFSTRTRENVVLAMLVDTLTAAAPVSALRSITVITPDEAAAAAAAEFGAEILADPTPDGHGDPLNNAIAAAEHAIAGSFSNIVVLQGDLPALQTQELSEAIAAARHHQRSFVADRLGSGTAALCTFGTALNPQFGPDSSAQHRRSGAIELTGPWPGLRCDVDTPADLAAARRLGIGAATTRVVAHL</sequence>
<name>FBID_MYCLE</name>